<feature type="signal peptide" evidence="2">
    <location>
        <begin position="1"/>
        <end position="28"/>
    </location>
</feature>
<feature type="chain" id="PRO_0000284848" description="Glycosyl-4,4'-diaponeurosporenoate acyltransferase">
    <location>
        <begin position="29"/>
        <end position="165"/>
    </location>
</feature>
<feature type="transmembrane region" description="Helical" evidence="2">
    <location>
        <begin position="126"/>
        <end position="145"/>
    </location>
</feature>
<sequence>MKTMKKYIKTAFFCSMYWLIVQLNIANLGTRIPDKYFRQKYIIFKSFNFEKHGKFWNKWFYVRKWKHKILDGHQLNQNIYDQRHLMTINTDEIEKMIIETKRAELIHWISILPVIIFNKGPRLVKYINIFYAMIANVPIIIVQRYNRPRLTQLLRILKRRGERHD</sequence>
<accession>Q5HCY5</accession>
<organism>
    <name type="scientific">Staphylococcus aureus (strain COL)</name>
    <dbReference type="NCBI Taxonomy" id="93062"/>
    <lineage>
        <taxon>Bacteria</taxon>
        <taxon>Bacillati</taxon>
        <taxon>Bacillota</taxon>
        <taxon>Bacilli</taxon>
        <taxon>Bacillales</taxon>
        <taxon>Staphylococcaceae</taxon>
        <taxon>Staphylococcus</taxon>
    </lineage>
</organism>
<proteinExistence type="inferred from homology"/>
<gene>
    <name type="primary">crtO</name>
    <name type="ordered locus">SACOL2580</name>
</gene>
<comment type="function">
    <text evidence="1">Catalyzes the acylation of glycosyl-4,4'-diaponeurosporenoate, i.e. the esterification of glucose at the C6'' position with the carboxyl group of the C(15) fatty acid 12-methyltetradecanoic acid, to yield staphyloxanthin. This is the last step in the biosynthesis of this orange pigment, present in most staphylococci strains (By similarity).</text>
</comment>
<comment type="pathway">
    <text>Carotenoid biosynthesis; staphyloxanthin biosynthesis; staphyloxanthin from farnesyl diphosphate: step 5/5.</text>
</comment>
<comment type="subcellular location">
    <subcellularLocation>
        <location evidence="3">Cell membrane</location>
        <topology evidence="3">Single-pass membrane protein</topology>
    </subcellularLocation>
</comment>
<comment type="similarity">
    <text evidence="3">Belongs to the acyltransferase CrtO family.</text>
</comment>
<comment type="sequence caution" evidence="3">
    <conflict type="erroneous initiation">
        <sequence resource="EMBL-CDS" id="AAW38582"/>
    </conflict>
</comment>
<name>CRTO_STAAC</name>
<dbReference type="EC" id="2.3.1.-"/>
<dbReference type="EMBL" id="CP000046">
    <property type="protein sequence ID" value="AAW38582.1"/>
    <property type="status" value="ALT_INIT"/>
    <property type="molecule type" value="Genomic_DNA"/>
</dbReference>
<dbReference type="KEGG" id="sac:SACOL2580"/>
<dbReference type="HOGENOM" id="CLU_133300_0_0_9"/>
<dbReference type="UniPathway" id="UPA00029">
    <property type="reaction ID" value="UER00560"/>
</dbReference>
<dbReference type="Proteomes" id="UP000000530">
    <property type="component" value="Chromosome"/>
</dbReference>
<dbReference type="GO" id="GO:0005886">
    <property type="term" value="C:plasma membrane"/>
    <property type="evidence" value="ECO:0007669"/>
    <property type="project" value="UniProtKB-SubCell"/>
</dbReference>
<dbReference type="GO" id="GO:0016746">
    <property type="term" value="F:acyltransferase activity"/>
    <property type="evidence" value="ECO:0007669"/>
    <property type="project" value="UniProtKB-KW"/>
</dbReference>
<dbReference type="GO" id="GO:0016117">
    <property type="term" value="P:carotenoid biosynthetic process"/>
    <property type="evidence" value="ECO:0007669"/>
    <property type="project" value="UniProtKB-KW"/>
</dbReference>
<dbReference type="InterPro" id="IPR044021">
    <property type="entry name" value="CrtO"/>
</dbReference>
<dbReference type="Pfam" id="PF18927">
    <property type="entry name" value="CrtO"/>
    <property type="match status" value="1"/>
</dbReference>
<evidence type="ECO:0000250" key="1"/>
<evidence type="ECO:0000255" key="2"/>
<evidence type="ECO:0000305" key="3"/>
<protein>
    <recommendedName>
        <fullName>Glycosyl-4,4'-diaponeurosporenoate acyltransferase</fullName>
        <ecNumber>2.3.1.-</ecNumber>
    </recommendedName>
</protein>
<keyword id="KW-0012">Acyltransferase</keyword>
<keyword id="KW-0125">Carotenoid biosynthesis</keyword>
<keyword id="KW-1003">Cell membrane</keyword>
<keyword id="KW-0472">Membrane</keyword>
<keyword id="KW-0732">Signal</keyword>
<keyword id="KW-0808">Transferase</keyword>
<keyword id="KW-0812">Transmembrane</keyword>
<keyword id="KW-1133">Transmembrane helix</keyword>
<reference key="1">
    <citation type="journal article" date="2005" name="J. Bacteriol.">
        <title>Insights on evolution of virulence and resistance from the complete genome analysis of an early methicillin-resistant Staphylococcus aureus strain and a biofilm-producing methicillin-resistant Staphylococcus epidermidis strain.</title>
        <authorList>
            <person name="Gill S.R."/>
            <person name="Fouts D.E."/>
            <person name="Archer G.L."/>
            <person name="Mongodin E.F."/>
            <person name="DeBoy R.T."/>
            <person name="Ravel J."/>
            <person name="Paulsen I.T."/>
            <person name="Kolonay J.F."/>
            <person name="Brinkac L.M."/>
            <person name="Beanan M.J."/>
            <person name="Dodson R.J."/>
            <person name="Daugherty S.C."/>
            <person name="Madupu R."/>
            <person name="Angiuoli S.V."/>
            <person name="Durkin A.S."/>
            <person name="Haft D.H."/>
            <person name="Vamathevan J.J."/>
            <person name="Khouri H."/>
            <person name="Utterback T.R."/>
            <person name="Lee C."/>
            <person name="Dimitrov G."/>
            <person name="Jiang L."/>
            <person name="Qin H."/>
            <person name="Weidman J."/>
            <person name="Tran K."/>
            <person name="Kang K.H."/>
            <person name="Hance I.R."/>
            <person name="Nelson K.E."/>
            <person name="Fraser C.M."/>
        </authorList>
    </citation>
    <scope>NUCLEOTIDE SEQUENCE [LARGE SCALE GENOMIC DNA]</scope>
    <source>
        <strain>COL</strain>
    </source>
</reference>